<organism>
    <name type="scientific">Halobacterium salinarum (strain ATCC 29341 / DSM 671 / R1)</name>
    <dbReference type="NCBI Taxonomy" id="478009"/>
    <lineage>
        <taxon>Archaea</taxon>
        <taxon>Methanobacteriati</taxon>
        <taxon>Methanobacteriota</taxon>
        <taxon>Stenosarchaea group</taxon>
        <taxon>Halobacteria</taxon>
        <taxon>Halobacteriales</taxon>
        <taxon>Halobacteriaceae</taxon>
        <taxon>Halobacterium</taxon>
        <taxon>Halobacterium salinarum NRC-34001</taxon>
    </lineage>
</organism>
<name>NUSA_HALS3</name>
<accession>B0R8D2</accession>
<accession>P15739</accession>
<accession>Q9HM81</accession>
<proteinExistence type="inferred from homology"/>
<evidence type="ECO:0000255" key="1">
    <source>
        <dbReference type="HAMAP-Rule" id="MF_00945"/>
    </source>
</evidence>
<sequence length="139" mass="14513">MTIRLSDEARQLIAVFETETDATAVDCLPDDDRVVYVVTAGEMGAAIGDGGSRVDALEATLGRSVVLVEDAPTAEGFVANALSPAAVYNVTVSENDTTVAYAEVAHEDKGVAIGADGTNIETAKELAARHFDIDDIQLT</sequence>
<reference key="1">
    <citation type="journal article" date="1989" name="J. Mol. Biol.">
        <title>Sequence, organization, transcription and evolution of RNA polymerase subunit genes from the archaebacterial extreme halophiles Halobacterium halobium and Halococcus morrhuae.</title>
        <authorList>
            <person name="Leffers H."/>
            <person name="Gropp F."/>
            <person name="Lottspeich F."/>
            <person name="Zillig W."/>
            <person name="Garrett R.A."/>
        </authorList>
    </citation>
    <scope>NUCLEOTIDE SEQUENCE [GENOMIC DNA]</scope>
    <source>
        <strain>ATCC 29341 / DSM 671 / R1</strain>
    </source>
</reference>
<reference key="2">
    <citation type="journal article" date="2008" name="Genomics">
        <title>Evolution in the laboratory: the genome of Halobacterium salinarum strain R1 compared to that of strain NRC-1.</title>
        <authorList>
            <person name="Pfeiffer F."/>
            <person name="Schuster S.C."/>
            <person name="Broicher A."/>
            <person name="Falb M."/>
            <person name="Palm P."/>
            <person name="Rodewald K."/>
            <person name="Ruepp A."/>
            <person name="Soppa J."/>
            <person name="Tittor J."/>
            <person name="Oesterhelt D."/>
        </authorList>
    </citation>
    <scope>NUCLEOTIDE SEQUENCE [LARGE SCALE GENOMIC DNA]</scope>
    <source>
        <strain>ATCC 29341 / DSM 671 / R1</strain>
    </source>
</reference>
<comment type="function">
    <text evidence="1">Participates in transcription termination.</text>
</comment>
<comment type="subcellular location">
    <subcellularLocation>
        <location evidence="1">Cytoplasm</location>
    </subcellularLocation>
</comment>
<comment type="similarity">
    <text evidence="1">Belongs to the NusA family.</text>
</comment>
<gene>
    <name evidence="1" type="primary">nusA</name>
    <name type="ordered locus">OE_4738R</name>
</gene>
<protein>
    <recommendedName>
        <fullName evidence="1">Probable transcription termination protein NusA</fullName>
    </recommendedName>
</protein>
<dbReference type="EMBL" id="X57144">
    <property type="protein sequence ID" value="CAA40428.1"/>
    <property type="molecule type" value="Genomic_DNA"/>
</dbReference>
<dbReference type="EMBL" id="AM774415">
    <property type="protein sequence ID" value="CAP15001.1"/>
    <property type="molecule type" value="Genomic_DNA"/>
</dbReference>
<dbReference type="PIR" id="S03579">
    <property type="entry name" value="S03579"/>
</dbReference>
<dbReference type="RefSeq" id="WP_010903994.1">
    <property type="nucleotide sequence ID" value="NC_010364.1"/>
</dbReference>
<dbReference type="SMR" id="B0R8D2"/>
<dbReference type="EnsemblBacteria" id="CAP15001">
    <property type="protein sequence ID" value="CAP15001"/>
    <property type="gene ID" value="OE_4738R"/>
</dbReference>
<dbReference type="KEGG" id="hsl:OE_4738R"/>
<dbReference type="HOGENOM" id="CLU_131906_0_0_2"/>
<dbReference type="PhylomeDB" id="B0R8D2"/>
<dbReference type="Proteomes" id="UP000001321">
    <property type="component" value="Chromosome"/>
</dbReference>
<dbReference type="GO" id="GO:0005829">
    <property type="term" value="C:cytosol"/>
    <property type="evidence" value="ECO:0007669"/>
    <property type="project" value="TreeGrafter"/>
</dbReference>
<dbReference type="GO" id="GO:0003723">
    <property type="term" value="F:RNA binding"/>
    <property type="evidence" value="ECO:0007669"/>
    <property type="project" value="UniProtKB-KW"/>
</dbReference>
<dbReference type="GO" id="GO:0006353">
    <property type="term" value="P:DNA-templated transcription termination"/>
    <property type="evidence" value="ECO:0007669"/>
    <property type="project" value="UniProtKB-UniRule"/>
</dbReference>
<dbReference type="GO" id="GO:0031564">
    <property type="term" value="P:transcription antitermination"/>
    <property type="evidence" value="ECO:0007669"/>
    <property type="project" value="InterPro"/>
</dbReference>
<dbReference type="CDD" id="cd22530">
    <property type="entry name" value="KH-II_NusA_arch_rpt1"/>
    <property type="match status" value="1"/>
</dbReference>
<dbReference type="CDD" id="cd22531">
    <property type="entry name" value="KH-II_NusA_arch_rpt2"/>
    <property type="match status" value="1"/>
</dbReference>
<dbReference type="Gene3D" id="3.30.300.20">
    <property type="match status" value="2"/>
</dbReference>
<dbReference type="HAMAP" id="MF_00945_A">
    <property type="entry name" value="NusA_A"/>
    <property type="match status" value="1"/>
</dbReference>
<dbReference type="InterPro" id="IPR015946">
    <property type="entry name" value="KH_dom-like_a/b"/>
</dbReference>
<dbReference type="InterPro" id="IPR025249">
    <property type="entry name" value="KH_dom_NusA-like"/>
</dbReference>
<dbReference type="InterPro" id="IPR009019">
    <property type="entry name" value="KH_sf_prok-type"/>
</dbReference>
<dbReference type="InterPro" id="IPR010212">
    <property type="entry name" value="NusA_arc"/>
</dbReference>
<dbReference type="InterPro" id="IPR030842">
    <property type="entry name" value="NusA_bac"/>
</dbReference>
<dbReference type="NCBIfam" id="TIGR01952">
    <property type="entry name" value="nusA_arch"/>
    <property type="match status" value="1"/>
</dbReference>
<dbReference type="PANTHER" id="PTHR22648">
    <property type="entry name" value="TRANSCRIPTION TERMINATION FACTOR NUSA"/>
    <property type="match status" value="1"/>
</dbReference>
<dbReference type="PANTHER" id="PTHR22648:SF0">
    <property type="entry name" value="TRANSCRIPTION TERMINATION_ANTITERMINATION PROTEIN NUSA"/>
    <property type="match status" value="1"/>
</dbReference>
<dbReference type="Pfam" id="PF13184">
    <property type="entry name" value="KH_5"/>
    <property type="match status" value="1"/>
</dbReference>
<dbReference type="SUPFAM" id="SSF54814">
    <property type="entry name" value="Prokaryotic type KH domain (KH-domain type II)"/>
    <property type="match status" value="2"/>
</dbReference>
<keyword id="KW-0963">Cytoplasm</keyword>
<keyword id="KW-0694">RNA-binding</keyword>
<keyword id="KW-0804">Transcription</keyword>
<keyword id="KW-0805">Transcription regulation</keyword>
<keyword id="KW-0806">Transcription termination</keyword>
<feature type="chain" id="PRO_0000409668" description="Probable transcription termination protein NusA">
    <location>
        <begin position="1"/>
        <end position="139"/>
    </location>
</feature>
<feature type="domain" description="KH" evidence="1">
    <location>
        <begin position="31"/>
        <end position="97"/>
    </location>
</feature>